<comment type="function">
    <text evidence="1">Part of the ABC transporter complex PstSACB involved in phosphate import. Responsible for energy coupling to the transport system.</text>
</comment>
<comment type="catalytic activity">
    <reaction evidence="1">
        <text>phosphate(out) + ATP + H2O = ADP + 2 phosphate(in) + H(+)</text>
        <dbReference type="Rhea" id="RHEA:24440"/>
        <dbReference type="ChEBI" id="CHEBI:15377"/>
        <dbReference type="ChEBI" id="CHEBI:15378"/>
        <dbReference type="ChEBI" id="CHEBI:30616"/>
        <dbReference type="ChEBI" id="CHEBI:43474"/>
        <dbReference type="ChEBI" id="CHEBI:456216"/>
        <dbReference type="EC" id="7.3.2.1"/>
    </reaction>
</comment>
<comment type="subunit">
    <text evidence="1">The complex is composed of two ATP-binding proteins (PstB), two transmembrane proteins (PstC and PstA) and a solute-binding protein (PstS).</text>
</comment>
<comment type="subcellular location">
    <subcellularLocation>
        <location evidence="1">Cell inner membrane</location>
        <topology evidence="1">Peripheral membrane protein</topology>
    </subcellularLocation>
</comment>
<comment type="similarity">
    <text evidence="1">Belongs to the ABC transporter superfamily. Phosphate importer (TC 3.A.1.7) family.</text>
</comment>
<sequence length="275" mass="30872">MRPPFPGTPDSSKKSANLTVKLETQAVSVYYGSHLAVKQVSLKIPKNHITAFIGPSGCGKSTLLRCFNRMNDLIPGARVEGSVIFHGKNIYDPDVDPAEVRRRVGLVFQKPNPFPKSIYDNIAFGPRVNGYQGDLDELVERALRQAVLWDEVKDKLKTSGLSLSGGQQQRLCIARTLAIQPEVILMDEPCASLDPISTLRIEELLKELGRRYTIIIVTHNMQQAARVSDFTAFFNTEVDEEGFRYGRLVEFNRTEKIFNSPAHRETEEYVSGRFG</sequence>
<keyword id="KW-0067">ATP-binding</keyword>
<keyword id="KW-0997">Cell inner membrane</keyword>
<keyword id="KW-1003">Cell membrane</keyword>
<keyword id="KW-0472">Membrane</keyword>
<keyword id="KW-0547">Nucleotide-binding</keyword>
<keyword id="KW-0592">Phosphate transport</keyword>
<keyword id="KW-1185">Reference proteome</keyword>
<keyword id="KW-1278">Translocase</keyword>
<keyword id="KW-0813">Transport</keyword>
<feature type="chain" id="PRO_0000272559" description="Phosphate import ATP-binding protein PstB 1">
    <location>
        <begin position="1"/>
        <end position="275"/>
    </location>
</feature>
<feature type="domain" description="ABC transporter" evidence="1">
    <location>
        <begin position="22"/>
        <end position="261"/>
    </location>
</feature>
<feature type="binding site" evidence="1">
    <location>
        <begin position="54"/>
        <end position="61"/>
    </location>
    <ligand>
        <name>ATP</name>
        <dbReference type="ChEBI" id="CHEBI:30616"/>
    </ligand>
</feature>
<proteinExistence type="inferred from homology"/>
<dbReference type="EC" id="7.3.2.1" evidence="1"/>
<dbReference type="EMBL" id="CP000240">
    <property type="protein sequence ID" value="ABD02051.1"/>
    <property type="molecule type" value="Genomic_DNA"/>
</dbReference>
<dbReference type="RefSeq" id="WP_011432705.1">
    <property type="nucleotide sequence ID" value="NC_007776.1"/>
</dbReference>
<dbReference type="SMR" id="Q2JMJ0"/>
<dbReference type="STRING" id="321332.CYB_1074"/>
<dbReference type="KEGG" id="cyb:CYB_1074"/>
<dbReference type="eggNOG" id="COG1117">
    <property type="taxonomic scope" value="Bacteria"/>
</dbReference>
<dbReference type="HOGENOM" id="CLU_000604_1_22_3"/>
<dbReference type="OrthoDB" id="9802185at2"/>
<dbReference type="Proteomes" id="UP000001938">
    <property type="component" value="Chromosome"/>
</dbReference>
<dbReference type="GO" id="GO:0005886">
    <property type="term" value="C:plasma membrane"/>
    <property type="evidence" value="ECO:0007669"/>
    <property type="project" value="UniProtKB-SubCell"/>
</dbReference>
<dbReference type="GO" id="GO:0005524">
    <property type="term" value="F:ATP binding"/>
    <property type="evidence" value="ECO:0007669"/>
    <property type="project" value="UniProtKB-KW"/>
</dbReference>
<dbReference type="GO" id="GO:0016887">
    <property type="term" value="F:ATP hydrolysis activity"/>
    <property type="evidence" value="ECO:0007669"/>
    <property type="project" value="InterPro"/>
</dbReference>
<dbReference type="GO" id="GO:0015415">
    <property type="term" value="F:ATPase-coupled phosphate ion transmembrane transporter activity"/>
    <property type="evidence" value="ECO:0007669"/>
    <property type="project" value="UniProtKB-EC"/>
</dbReference>
<dbReference type="GO" id="GO:0035435">
    <property type="term" value="P:phosphate ion transmembrane transport"/>
    <property type="evidence" value="ECO:0007669"/>
    <property type="project" value="InterPro"/>
</dbReference>
<dbReference type="CDD" id="cd03260">
    <property type="entry name" value="ABC_PstB_phosphate_transporter"/>
    <property type="match status" value="1"/>
</dbReference>
<dbReference type="Gene3D" id="3.40.50.300">
    <property type="entry name" value="P-loop containing nucleotide triphosphate hydrolases"/>
    <property type="match status" value="1"/>
</dbReference>
<dbReference type="InterPro" id="IPR003593">
    <property type="entry name" value="AAA+_ATPase"/>
</dbReference>
<dbReference type="InterPro" id="IPR003439">
    <property type="entry name" value="ABC_transporter-like_ATP-bd"/>
</dbReference>
<dbReference type="InterPro" id="IPR017871">
    <property type="entry name" value="ABC_transporter-like_CS"/>
</dbReference>
<dbReference type="InterPro" id="IPR027417">
    <property type="entry name" value="P-loop_NTPase"/>
</dbReference>
<dbReference type="InterPro" id="IPR005670">
    <property type="entry name" value="PstB-like"/>
</dbReference>
<dbReference type="NCBIfam" id="TIGR00972">
    <property type="entry name" value="3a0107s01c2"/>
    <property type="match status" value="1"/>
</dbReference>
<dbReference type="PANTHER" id="PTHR43423">
    <property type="entry name" value="ABC TRANSPORTER I FAMILY MEMBER 17"/>
    <property type="match status" value="1"/>
</dbReference>
<dbReference type="PANTHER" id="PTHR43423:SF1">
    <property type="entry name" value="ABC TRANSPORTER I FAMILY MEMBER 17"/>
    <property type="match status" value="1"/>
</dbReference>
<dbReference type="Pfam" id="PF00005">
    <property type="entry name" value="ABC_tran"/>
    <property type="match status" value="1"/>
</dbReference>
<dbReference type="SMART" id="SM00382">
    <property type="entry name" value="AAA"/>
    <property type="match status" value="1"/>
</dbReference>
<dbReference type="SUPFAM" id="SSF52540">
    <property type="entry name" value="P-loop containing nucleoside triphosphate hydrolases"/>
    <property type="match status" value="1"/>
</dbReference>
<dbReference type="PROSITE" id="PS00211">
    <property type="entry name" value="ABC_TRANSPORTER_1"/>
    <property type="match status" value="1"/>
</dbReference>
<dbReference type="PROSITE" id="PS50893">
    <property type="entry name" value="ABC_TRANSPORTER_2"/>
    <property type="match status" value="1"/>
</dbReference>
<dbReference type="PROSITE" id="PS51238">
    <property type="entry name" value="PSTB"/>
    <property type="match status" value="1"/>
</dbReference>
<gene>
    <name evidence="1" type="primary">pstB1</name>
    <name type="synonym">pstB-1</name>
    <name type="ordered locus">CYB_1074</name>
</gene>
<accession>Q2JMJ0</accession>
<evidence type="ECO:0000255" key="1">
    <source>
        <dbReference type="HAMAP-Rule" id="MF_01702"/>
    </source>
</evidence>
<protein>
    <recommendedName>
        <fullName evidence="1">Phosphate import ATP-binding protein PstB 1</fullName>
        <ecNumber evidence="1">7.3.2.1</ecNumber>
    </recommendedName>
    <alternativeName>
        <fullName evidence="1">ABC phosphate transporter 1</fullName>
    </alternativeName>
    <alternativeName>
        <fullName evidence="1">Phosphate-transporting ATPase 1</fullName>
    </alternativeName>
</protein>
<reference key="1">
    <citation type="journal article" date="2007" name="ISME J.">
        <title>Population level functional diversity in a microbial community revealed by comparative genomic and metagenomic analyses.</title>
        <authorList>
            <person name="Bhaya D."/>
            <person name="Grossman A.R."/>
            <person name="Steunou A.-S."/>
            <person name="Khuri N."/>
            <person name="Cohan F.M."/>
            <person name="Hamamura N."/>
            <person name="Melendrez M.C."/>
            <person name="Bateson M.M."/>
            <person name="Ward D.M."/>
            <person name="Heidelberg J.F."/>
        </authorList>
    </citation>
    <scope>NUCLEOTIDE SEQUENCE [LARGE SCALE GENOMIC DNA]</scope>
    <source>
        <strain>JA-2-3B'a(2-13)</strain>
    </source>
</reference>
<organism>
    <name type="scientific">Synechococcus sp. (strain JA-2-3B'a(2-13))</name>
    <name type="common">Cyanobacteria bacterium Yellowstone B-Prime</name>
    <dbReference type="NCBI Taxonomy" id="321332"/>
    <lineage>
        <taxon>Bacteria</taxon>
        <taxon>Bacillati</taxon>
        <taxon>Cyanobacteriota</taxon>
        <taxon>Cyanophyceae</taxon>
        <taxon>Synechococcales</taxon>
        <taxon>Synechococcaceae</taxon>
        <taxon>Synechococcus</taxon>
    </lineage>
</organism>
<name>PSTB1_SYNJB</name>